<reference key="1">
    <citation type="journal article" date="2001" name="Biol. Chem.">
        <title>Molecular cloning and biochemical characterisation of proteases from Staphylcoccus epidermidis.</title>
        <authorList>
            <person name="Dubin G."/>
            <person name="Chmiel D."/>
            <person name="Mak P."/>
            <person name="Rakwalska M."/>
            <person name="Rzychon M."/>
            <person name="Dubin A."/>
        </authorList>
    </citation>
    <scope>NUCLEOTIDE SEQUENCE [GENOMIC DNA]</scope>
    <scope>PROTEIN SEQUENCE OF 1-47 AND 149-174</scope>
    <scope>FUNCTION</scope>
    <scope>ACTIVITY REGULATION</scope>
    <source>
        <strain>6746</strain>
    </source>
</reference>
<reference key="2">
    <citation type="journal article" date="2004" name="Biol. Chem.">
        <title>Growth phase-dependent production of a cell wall-associated elastinolytic cysteine proteinase by Staphylococcus epidermidis.</title>
        <authorList>
            <person name="Oleksy A."/>
            <person name="Golonka E."/>
            <person name="Banbula A."/>
            <person name="Szmyd G."/>
            <person name="Moon J."/>
            <person name="Kubica M."/>
            <person name="Greenbaum D."/>
            <person name="Bogyo M."/>
            <person name="Foster T.J."/>
            <person name="Travis J."/>
            <person name="Potempa J."/>
        </authorList>
    </citation>
    <scope>PROTEIN SEQUENCE OF 1-12</scope>
    <scope>FUNCTION</scope>
    <scope>INDUCTION</scope>
    <scope>SUBCELLULAR LOCATION</scope>
    <source>
        <strain>ATCC 14990 / DSM 20044 / CIP 81.55 / NCTC 11047</strain>
        <strain>TU 3298 / DSM 3095</strain>
        <strain>TU 9142</strain>
    </source>
</reference>
<evidence type="ECO:0000255" key="1">
    <source>
        <dbReference type="PROSITE-ProRule" id="PRU10089"/>
    </source>
</evidence>
<evidence type="ECO:0000269" key="2">
    <source>
    </source>
</evidence>
<evidence type="ECO:0000269" key="3">
    <source>
    </source>
</evidence>
<evidence type="ECO:0000305" key="4"/>
<protein>
    <recommendedName>
        <fullName>Extracellular cysteine protease</fullName>
        <ecNumber>3.4.22.-</ecNumber>
    </recommendedName>
    <alternativeName>
        <fullName>Staphopain</fullName>
    </alternativeName>
</protein>
<sequence>MYAEYVNQLKNFRIRETQGYNSWCAGYTMSALLNATYNTNRYNAESVMRYLHPNLRGHDFQFTGLTSNEMLRFGRSQGRNTQYLNRMTSYNEVDQLTTNNQGIAVLGKRVESSDGIHAGHAMAVAGNAKVNNGQKVILIWNPWDNGLMTQDAHSNIIPVSNGDHYEWYASIYGY</sequence>
<proteinExistence type="evidence at protein level"/>
<keyword id="KW-0134">Cell wall</keyword>
<keyword id="KW-0903">Direct protein sequencing</keyword>
<keyword id="KW-0378">Hydrolase</keyword>
<keyword id="KW-0645">Protease</keyword>
<keyword id="KW-0964">Secreted</keyword>
<keyword id="KW-0788">Thiol protease</keyword>
<keyword id="KW-0843">Virulence</keyword>
<keyword id="KW-0865">Zymogen</keyword>
<gene>
    <name type="primary">ecpA</name>
    <name type="synonym">ecp</name>
</gene>
<name>ECPA_STAEP</name>
<feature type="chain" id="PRO_0000220334" description="Extracellular cysteine protease">
    <location>
        <begin position="1"/>
        <end position="174"/>
    </location>
</feature>
<feature type="active site" evidence="1">
    <location>
        <position position="24"/>
    </location>
</feature>
<feature type="active site" evidence="1">
    <location>
        <position position="120"/>
    </location>
</feature>
<feature type="active site" evidence="1">
    <location>
        <position position="141"/>
    </location>
</feature>
<dbReference type="EC" id="3.4.22.-"/>
<dbReference type="EMBL" id="AJ298299">
    <property type="protein sequence ID" value="CAC22343.1"/>
    <property type="molecule type" value="Genomic_DNA"/>
</dbReference>
<dbReference type="SMR" id="P0C0P9"/>
<dbReference type="MEROPS" id="C47.003"/>
<dbReference type="KEGG" id="ag:CAC22343"/>
<dbReference type="GO" id="GO:0005576">
    <property type="term" value="C:extracellular region"/>
    <property type="evidence" value="ECO:0007669"/>
    <property type="project" value="UniProtKB-SubCell"/>
</dbReference>
<dbReference type="GO" id="GO:0008234">
    <property type="term" value="F:cysteine-type peptidase activity"/>
    <property type="evidence" value="ECO:0007669"/>
    <property type="project" value="UniProtKB-KW"/>
</dbReference>
<dbReference type="GO" id="GO:0006508">
    <property type="term" value="P:proteolysis"/>
    <property type="evidence" value="ECO:0007669"/>
    <property type="project" value="UniProtKB-KW"/>
</dbReference>
<dbReference type="Gene3D" id="3.90.70.10">
    <property type="entry name" value="Cysteine proteinases"/>
    <property type="match status" value="1"/>
</dbReference>
<dbReference type="InterPro" id="IPR038765">
    <property type="entry name" value="Papain-like_cys_pep_sf"/>
</dbReference>
<dbReference type="InterPro" id="IPR025660">
    <property type="entry name" value="Pept_his_AS"/>
</dbReference>
<dbReference type="InterPro" id="IPR008750">
    <property type="entry name" value="Peptidase_C47"/>
</dbReference>
<dbReference type="Pfam" id="PF05543">
    <property type="entry name" value="Peptidase_C47"/>
    <property type="match status" value="1"/>
</dbReference>
<dbReference type="SUPFAM" id="SSF54001">
    <property type="entry name" value="Cysteine proteinases"/>
    <property type="match status" value="1"/>
</dbReference>
<dbReference type="PROSITE" id="PS00639">
    <property type="entry name" value="THIOL_PROTEASE_HIS"/>
    <property type="match status" value="1"/>
</dbReference>
<comment type="function">
    <text evidence="2 3">Cysteine protease able to cleave elastin, insulin, myoglobin, fibronectin, fibrinogen, HMW-kininogen, alpha-1-protease inhibitor and alpha-1-antitrypsin. Along with other extracellular proteases may contribute to the colonization and infection of human tissues.</text>
</comment>
<comment type="activity regulation">
    <text evidence="2">Inhibited by heavy metal ions such as Zn(2+) or Ni(2+), iodoacetamide, N-ethylmaleimide, leupeptin, SDS and E-64. Also inhibited by chloromethylketones TPCK and TLCK and by human plasma inhibitor alpha-2-macroglobulin. Stimulated by L-cysteine.</text>
</comment>
<comment type="biophysicochemical properties">
    <phDependence>
        <text>Optimum pH is 7.0 for elastin hydrolysis.</text>
    </phDependence>
</comment>
<comment type="subcellular location">
    <subcellularLocation>
        <location evidence="3">Secreted</location>
        <location evidence="3">Cell wall</location>
    </subcellularLocation>
    <subcellularLocation>
        <location evidence="3">Secreted</location>
    </subcellularLocation>
</comment>
<comment type="induction">
    <text evidence="3">Expression occurs in a growth-phase-dependent manner with optimal expression at post-exponential phase.</text>
</comment>
<comment type="PTM">
    <text>Proteolytically cleaved.</text>
</comment>
<comment type="similarity">
    <text evidence="4">Belongs to the peptidase C47 family.</text>
</comment>
<organism>
    <name type="scientific">Staphylococcus epidermidis</name>
    <dbReference type="NCBI Taxonomy" id="1282"/>
    <lineage>
        <taxon>Bacteria</taxon>
        <taxon>Bacillati</taxon>
        <taxon>Bacillota</taxon>
        <taxon>Bacilli</taxon>
        <taxon>Bacillales</taxon>
        <taxon>Staphylococcaceae</taxon>
        <taxon>Staphylococcus</taxon>
    </lineage>
</organism>
<accession>P0C0P9</accession>
<accession>Q8CMM9</accession>
<accession>Q9EWC9</accession>